<protein>
    <recommendedName>
        <fullName>Interferon alpha-12</fullName>
        <shortName>IFN-alpha-12</shortName>
    </recommendedName>
</protein>
<organism>
    <name type="scientific">Mus musculus</name>
    <name type="common">Mouse</name>
    <dbReference type="NCBI Taxonomy" id="10090"/>
    <lineage>
        <taxon>Eukaryota</taxon>
        <taxon>Metazoa</taxon>
        <taxon>Chordata</taxon>
        <taxon>Craniata</taxon>
        <taxon>Vertebrata</taxon>
        <taxon>Euteleostomi</taxon>
        <taxon>Mammalia</taxon>
        <taxon>Eutheria</taxon>
        <taxon>Euarchontoglires</taxon>
        <taxon>Glires</taxon>
        <taxon>Rodentia</taxon>
        <taxon>Myomorpha</taxon>
        <taxon>Muroidea</taxon>
        <taxon>Muridae</taxon>
        <taxon>Murinae</taxon>
        <taxon>Mus</taxon>
        <taxon>Mus</taxon>
    </lineage>
</organism>
<gene>
    <name type="primary">Ifna12</name>
</gene>
<name>IFNAC_MOUSE</name>
<sequence length="189" mass="21752">MARLCAFLMTLLVMSYWSTCSLGCDLPQTHNLRNKRALTLLAQMRRLSPLSCLKDRKNFRFPQEKVDAQQIKKAQVIPVLSELTQQILTLFTSKDSSAAWNTTLLDSFCNDLHQQLNDLQGCLMQQVGVQEPPLTQEDSLLAVRKYFHRITVYLREKKHSPCAWEVVRAEVWRTLSSSAKLLARLSEKE</sequence>
<accession>Q80SS5</accession>
<proteinExistence type="evidence at transcript level"/>
<dbReference type="EMBL" id="AY190046">
    <property type="protein sequence ID" value="AAO38687.1"/>
    <property type="molecule type" value="mRNA"/>
</dbReference>
<dbReference type="EMBL" id="AY225951">
    <property type="protein sequence ID" value="AAO63593.1"/>
    <property type="molecule type" value="Genomic_DNA"/>
</dbReference>
<dbReference type="EMBL" id="AL772394">
    <property type="status" value="NOT_ANNOTATED_CDS"/>
    <property type="molecule type" value="Genomic_DNA"/>
</dbReference>
<dbReference type="EMBL" id="BC104352">
    <property type="protein sequence ID" value="AAI04353.1"/>
    <property type="molecule type" value="mRNA"/>
</dbReference>
<dbReference type="EMBL" id="BC104353">
    <property type="protein sequence ID" value="AAI04354.1"/>
    <property type="molecule type" value="mRNA"/>
</dbReference>
<dbReference type="CCDS" id="CCDS18322.1"/>
<dbReference type="RefSeq" id="NP_796335.1">
    <property type="nucleotide sequence ID" value="NM_177361.2"/>
</dbReference>
<dbReference type="SMR" id="Q80SS5"/>
<dbReference type="BioGRID" id="232416">
    <property type="interactions" value="1"/>
</dbReference>
<dbReference type="FunCoup" id="Q80SS5">
    <property type="interactions" value="1094"/>
</dbReference>
<dbReference type="IntAct" id="Q80SS5">
    <property type="interactions" value="1"/>
</dbReference>
<dbReference type="STRING" id="10090.ENSMUSP00000099870"/>
<dbReference type="GlyCosmos" id="Q80SS5">
    <property type="glycosylation" value="1 site, No reported glycans"/>
</dbReference>
<dbReference type="GlyGen" id="Q80SS5">
    <property type="glycosylation" value="1 site"/>
</dbReference>
<dbReference type="PaxDb" id="10090-ENSMUSP00000099870"/>
<dbReference type="DNASU" id="242519"/>
<dbReference type="Ensembl" id="ENSMUST00000102806.2">
    <property type="protein sequence ID" value="ENSMUSP00000099870.2"/>
    <property type="gene ID" value="ENSMUSG00000073811.5"/>
</dbReference>
<dbReference type="GeneID" id="242519"/>
<dbReference type="KEGG" id="mmu:242519"/>
<dbReference type="UCSC" id="uc008tnd.1">
    <property type="organism name" value="mouse"/>
</dbReference>
<dbReference type="AGR" id="MGI:2676324"/>
<dbReference type="CTD" id="242519"/>
<dbReference type="MGI" id="MGI:2676324">
    <property type="gene designation" value="Ifna12"/>
</dbReference>
<dbReference type="VEuPathDB" id="HostDB:ENSMUSG00000073811"/>
<dbReference type="eggNOG" id="ENOG502SQAC">
    <property type="taxonomic scope" value="Eukaryota"/>
</dbReference>
<dbReference type="GeneTree" id="ENSGT01000000214430"/>
<dbReference type="HOGENOM" id="CLU_109427_0_0_1"/>
<dbReference type="InParanoid" id="Q80SS5"/>
<dbReference type="OMA" id="KYSSAAW"/>
<dbReference type="OrthoDB" id="9833506at2759"/>
<dbReference type="PhylomeDB" id="Q80SS5"/>
<dbReference type="TreeFam" id="TF336177"/>
<dbReference type="Reactome" id="R-MMU-909733">
    <property type="pathway name" value="Interferon alpha/beta signaling"/>
</dbReference>
<dbReference type="Reactome" id="R-MMU-912694">
    <property type="pathway name" value="Regulation of IFNA/IFNB signaling"/>
</dbReference>
<dbReference type="BioGRID-ORCS" id="242519">
    <property type="hits" value="3 hits in 40 CRISPR screens"/>
</dbReference>
<dbReference type="PRO" id="PR:Q80SS5"/>
<dbReference type="Proteomes" id="UP000000589">
    <property type="component" value="Chromosome 4"/>
</dbReference>
<dbReference type="RNAct" id="Q80SS5">
    <property type="molecule type" value="protein"/>
</dbReference>
<dbReference type="GO" id="GO:0005615">
    <property type="term" value="C:extracellular space"/>
    <property type="evidence" value="ECO:0007669"/>
    <property type="project" value="UniProtKB-KW"/>
</dbReference>
<dbReference type="GO" id="GO:0005125">
    <property type="term" value="F:cytokine activity"/>
    <property type="evidence" value="ECO:0007669"/>
    <property type="project" value="UniProtKB-KW"/>
</dbReference>
<dbReference type="GO" id="GO:0005126">
    <property type="term" value="F:cytokine receptor binding"/>
    <property type="evidence" value="ECO:0007669"/>
    <property type="project" value="InterPro"/>
</dbReference>
<dbReference type="GO" id="GO:0051607">
    <property type="term" value="P:defense response to virus"/>
    <property type="evidence" value="ECO:0007669"/>
    <property type="project" value="UniProtKB-KW"/>
</dbReference>
<dbReference type="CDD" id="cd00095">
    <property type="entry name" value="IFab"/>
    <property type="match status" value="1"/>
</dbReference>
<dbReference type="FunFam" id="1.20.1250.10:FF:000001">
    <property type="entry name" value="Interferon alpha"/>
    <property type="match status" value="1"/>
</dbReference>
<dbReference type="Gene3D" id="1.20.1250.10">
    <property type="match status" value="1"/>
</dbReference>
<dbReference type="InterPro" id="IPR009079">
    <property type="entry name" value="4_helix_cytokine-like_core"/>
</dbReference>
<dbReference type="InterPro" id="IPR000471">
    <property type="entry name" value="Interferon_alpha/beta/delta"/>
</dbReference>
<dbReference type="PANTHER" id="PTHR11691:SF60">
    <property type="entry name" value="INTERFERON ALPHA-5"/>
    <property type="match status" value="1"/>
</dbReference>
<dbReference type="PANTHER" id="PTHR11691">
    <property type="entry name" value="TYPE I INTERFERON"/>
    <property type="match status" value="1"/>
</dbReference>
<dbReference type="Pfam" id="PF00143">
    <property type="entry name" value="Interferon"/>
    <property type="match status" value="1"/>
</dbReference>
<dbReference type="PRINTS" id="PR00266">
    <property type="entry name" value="INTERFERONAB"/>
</dbReference>
<dbReference type="SMART" id="SM00076">
    <property type="entry name" value="IFabd"/>
    <property type="match status" value="1"/>
</dbReference>
<dbReference type="SUPFAM" id="SSF47266">
    <property type="entry name" value="4-helical cytokines"/>
    <property type="match status" value="1"/>
</dbReference>
<dbReference type="PROSITE" id="PS00252">
    <property type="entry name" value="INTERFERON_A_B_D"/>
    <property type="match status" value="1"/>
</dbReference>
<feature type="signal peptide" evidence="2">
    <location>
        <begin position="1"/>
        <end position="23"/>
    </location>
</feature>
<feature type="chain" id="PRO_5000090450" description="Interferon alpha-12">
    <location>
        <begin position="24"/>
        <end position="189"/>
    </location>
</feature>
<feature type="glycosylation site" description="N-linked (GlcNAc...) asparagine" evidence="2">
    <location>
        <position position="101"/>
    </location>
</feature>
<feature type="disulfide bond" evidence="1">
    <location>
        <begin position="24"/>
        <end position="122"/>
    </location>
</feature>
<feature type="disulfide bond" evidence="1">
    <location>
        <begin position="52"/>
        <end position="162"/>
    </location>
</feature>
<reference key="1">
    <citation type="journal article" date="2004" name="J. Virol.">
        <title>Characterization of the murine alpha interferon gene family.</title>
        <authorList>
            <person name="van Pesch V."/>
            <person name="Lanaya H."/>
            <person name="Renauld J.C."/>
            <person name="Michiels T."/>
        </authorList>
    </citation>
    <scope>NUCLEOTIDE SEQUENCE [MRNA]</scope>
    <source>
        <strain>C57BL/6J</strain>
    </source>
</reference>
<reference key="2">
    <citation type="journal article" date="2004" name="Genomics">
        <title>Characterization of the type I interferon locus and identification of novel genes.</title>
        <authorList>
            <person name="Hardy M.P."/>
            <person name="Owczarek C.M."/>
            <person name="Jermiin L.S."/>
            <person name="Ejdebaeck M."/>
            <person name="Hertzog P.J."/>
        </authorList>
    </citation>
    <scope>NUCLEOTIDE SEQUENCE [GENOMIC DNA]</scope>
    <source>
        <strain>C57BL/6J</strain>
    </source>
</reference>
<reference key="3">
    <citation type="journal article" date="2009" name="PLoS Biol.">
        <title>Lineage-specific biology revealed by a finished genome assembly of the mouse.</title>
        <authorList>
            <person name="Church D.M."/>
            <person name="Goodstadt L."/>
            <person name="Hillier L.W."/>
            <person name="Zody M.C."/>
            <person name="Goldstein S."/>
            <person name="She X."/>
            <person name="Bult C.J."/>
            <person name="Agarwala R."/>
            <person name="Cherry J.L."/>
            <person name="DiCuccio M."/>
            <person name="Hlavina W."/>
            <person name="Kapustin Y."/>
            <person name="Meric P."/>
            <person name="Maglott D."/>
            <person name="Birtle Z."/>
            <person name="Marques A.C."/>
            <person name="Graves T."/>
            <person name="Zhou S."/>
            <person name="Teague B."/>
            <person name="Potamousis K."/>
            <person name="Churas C."/>
            <person name="Place M."/>
            <person name="Herschleb J."/>
            <person name="Runnheim R."/>
            <person name="Forrest D."/>
            <person name="Amos-Landgraf J."/>
            <person name="Schwartz D.C."/>
            <person name="Cheng Z."/>
            <person name="Lindblad-Toh K."/>
            <person name="Eichler E.E."/>
            <person name="Ponting C.P."/>
        </authorList>
    </citation>
    <scope>NUCLEOTIDE SEQUENCE [LARGE SCALE GENOMIC DNA]</scope>
    <source>
        <strain>C57BL/6J</strain>
    </source>
</reference>
<reference key="4">
    <citation type="journal article" date="2004" name="Genome Res.">
        <title>The status, quality, and expansion of the NIH full-length cDNA project: the Mammalian Gene Collection (MGC).</title>
        <authorList>
            <consortium name="The MGC Project Team"/>
        </authorList>
    </citation>
    <scope>NUCLEOTIDE SEQUENCE [LARGE SCALE MRNA]</scope>
</reference>
<keyword id="KW-0051">Antiviral defense</keyword>
<keyword id="KW-0202">Cytokine</keyword>
<keyword id="KW-1015">Disulfide bond</keyword>
<keyword id="KW-0325">Glycoprotein</keyword>
<keyword id="KW-1185">Reference proteome</keyword>
<keyword id="KW-0964">Secreted</keyword>
<keyword id="KW-0732">Signal</keyword>
<comment type="function">
    <text evidence="1">Produced by macrophages, IFN-alpha have antiviral activities. Interferon stimulates the production of two enzymes: a protein kinase and an oligoadenylate synthetase (By similarity).</text>
</comment>
<comment type="subcellular location">
    <subcellularLocation>
        <location evidence="1">Secreted</location>
    </subcellularLocation>
</comment>
<comment type="similarity">
    <text evidence="3">Belongs to the alpha/beta interferon family.</text>
</comment>
<evidence type="ECO:0000250" key="1"/>
<evidence type="ECO:0000255" key="2"/>
<evidence type="ECO:0000305" key="3"/>